<organism evidence="3">
    <name type="scientific">Chassalia chartacea</name>
    <name type="common">Chassalia curviflora</name>
    <dbReference type="NCBI Taxonomy" id="510798"/>
    <lineage>
        <taxon>Eukaryota</taxon>
        <taxon>Viridiplantae</taxon>
        <taxon>Streptophyta</taxon>
        <taxon>Embryophyta</taxon>
        <taxon>Tracheophyta</taxon>
        <taxon>Spermatophyta</taxon>
        <taxon>Magnoliopsida</taxon>
        <taxon>eudicotyledons</taxon>
        <taxon>Gunneridae</taxon>
        <taxon>Pentapetalae</taxon>
        <taxon>asterids</taxon>
        <taxon>lamiids</taxon>
        <taxon>Gentianales</taxon>
        <taxon>Rubiaceae</taxon>
        <taxon>Rubioideae</taxon>
        <taxon>Palicoureeae</taxon>
        <taxon>Chassalia</taxon>
    </lineage>
</organism>
<accession>C0HKH5</accession>
<keyword id="KW-0903">Direct protein sequencing</keyword>
<keyword id="KW-1015">Disulfide bond</keyword>
<keyword id="KW-0960">Knottin</keyword>
<keyword id="KW-0611">Plant defense</keyword>
<dbReference type="SMR" id="C0HKH5"/>
<dbReference type="GO" id="GO:0006952">
    <property type="term" value="P:defense response"/>
    <property type="evidence" value="ECO:0007669"/>
    <property type="project" value="UniProtKB-KW"/>
</dbReference>
<dbReference type="InterPro" id="IPR005535">
    <property type="entry name" value="Cyclotide"/>
</dbReference>
<dbReference type="InterPro" id="IPR036146">
    <property type="entry name" value="Cyclotide_sf"/>
</dbReference>
<dbReference type="Pfam" id="PF03784">
    <property type="entry name" value="Cyclotide"/>
    <property type="match status" value="1"/>
</dbReference>
<dbReference type="SUPFAM" id="SSF57038">
    <property type="entry name" value="Cyclotides"/>
    <property type="match status" value="1"/>
</dbReference>
<protein>
    <recommendedName>
        <fullName evidence="3">Chassatide C12</fullName>
    </recommendedName>
    <alternativeName>
        <fullName evidence="3">Cyclotide chaC12</fullName>
    </alternativeName>
</protein>
<reference evidence="4" key="1">
    <citation type="journal article" date="2012" name="J. Biol. Chem.">
        <title>Novel Cyclotides and Uncyclotides with Highly Shortened Precursors from Chassalia chartacea and Effects of Methionine Oxidation on Bioactivities.</title>
        <authorList>
            <person name="Nguyen G.K."/>
            <person name="Lim W.H."/>
            <person name="Nguyen P.Q."/>
            <person name="Tam J.P."/>
        </authorList>
    </citation>
    <scope>PROTEIN SEQUENCE</scope>
    <scope>TISSUE SPECIFICITY</scope>
    <scope>MASS SPECTROMETRY</scope>
    <scope>IDENTIFICATION BY MASS SPECTROMETRY</scope>
</reference>
<proteinExistence type="evidence at protein level"/>
<sequence>EYCGESCYLIPCFTPGCYCVSRQCVNKN</sequence>
<evidence type="ECO:0000255" key="1">
    <source>
        <dbReference type="PROSITE-ProRule" id="PRU00395"/>
    </source>
</evidence>
<evidence type="ECO:0000269" key="2">
    <source>
    </source>
</evidence>
<evidence type="ECO:0000303" key="3">
    <source>
    </source>
</evidence>
<evidence type="ECO:0000305" key="4"/>
<comment type="function">
    <text evidence="1">Probably participates in a plant defense mechanism.</text>
</comment>
<comment type="tissue specificity">
    <text evidence="2">Expressed in fruit, pedicel, leaf and stem but not in root (at protein level).</text>
</comment>
<comment type="domain">
    <text evidence="4">The presence of a 'disulfide through disulfide knot' structurally defines this protein as a knottin.</text>
</comment>
<comment type="PTM">
    <text evidence="1 2">This is a cyclic peptide.</text>
</comment>
<comment type="mass spectrometry"/>
<comment type="similarity">
    <text evidence="1">Belongs to the cyclotide family.</text>
</comment>
<comment type="caution">
    <text evidence="4">This peptide is cyclic. The start position was chosen by similarity to chassatide C4 for which the DNA sequence is known.</text>
</comment>
<name>CYC12_CHACT</name>
<feature type="peptide" id="PRO_0000441840" description="Chassatide C12" evidence="2">
    <location>
        <begin position="1"/>
        <end position="28"/>
    </location>
</feature>
<feature type="disulfide bond" evidence="1">
    <location>
        <begin position="3"/>
        <end position="17"/>
    </location>
</feature>
<feature type="disulfide bond" evidence="1">
    <location>
        <begin position="7"/>
        <end position="19"/>
    </location>
</feature>
<feature type="disulfide bond" evidence="1">
    <location>
        <begin position="12"/>
        <end position="24"/>
    </location>
</feature>
<feature type="cross-link" description="Cyclopeptide (Glu-Asn)" evidence="2">
    <location>
        <begin position="1"/>
        <end position="28"/>
    </location>
</feature>